<keyword id="KW-0244">Early protein</keyword>
<evidence type="ECO:0000305" key="1"/>
<proteinExistence type="inferred from homology"/>
<protein>
    <recommendedName>
        <fullName>Gene product 16.5</fullName>
        <shortName>gp16.5</shortName>
    </recommendedName>
    <alternativeName>
        <fullName>Protein p16.5</fullName>
    </alternativeName>
</protein>
<name>GP165_BPPH2</name>
<reference key="1">
    <citation type="journal article" date="1985" name="Gene">
        <title>The complete sequence of the Bacillus phage phi 29 right early region.</title>
        <authorList>
            <person name="Garvey K.J."/>
            <person name="Yoshikawa H."/>
            <person name="Ito J."/>
        </authorList>
    </citation>
    <scope>NUCLEOTIDE SEQUENCE [GENOMIC DNA]</scope>
</reference>
<feature type="chain" id="PRO_0000106607" description="Gene product 16.5">
    <location>
        <begin position="1"/>
        <end position="37"/>
    </location>
</feature>
<accession>P16515</accession>
<dbReference type="EMBL" id="M14430">
    <property type="protein sequence ID" value="AAA88354.1"/>
    <property type="molecule type" value="Genomic_DNA"/>
</dbReference>
<dbReference type="PIR" id="JN0035">
    <property type="entry name" value="JN0035"/>
</dbReference>
<dbReference type="SMR" id="P16515"/>
<organism>
    <name type="scientific">Bacillus phage phi29</name>
    <name type="common">Bacteriophage phi-29</name>
    <dbReference type="NCBI Taxonomy" id="2884424"/>
    <lineage>
        <taxon>Viruses</taxon>
        <taxon>Duplodnaviria</taxon>
        <taxon>Heunggongvirae</taxon>
        <taxon>Uroviricota</taxon>
        <taxon>Caudoviricetes</taxon>
        <taxon>Salasmaviridae</taxon>
        <taxon>Picovirinae</taxon>
        <taxon>Salasvirus</taxon>
        <taxon>Salasvirus phi29</taxon>
    </lineage>
</organism>
<gene>
    <name type="primary">16.5</name>
</gene>
<sequence length="37" mass="4617">MNQKEFQAVLDWMLSPTIIQFHEYNYMLQKSLPFLRR</sequence>
<organismHost>
    <name type="scientific">Bacillus subtilis</name>
    <dbReference type="NCBI Taxonomy" id="1423"/>
</organismHost>
<comment type="similarity">
    <text evidence="1">Belongs to the phi29likevirus gp16.5 family.</text>
</comment>